<organismHost>
    <name type="scientific">Aves</name>
    <dbReference type="NCBI Taxonomy" id="8782"/>
</organismHost>
<organismHost>
    <name type="scientific">Cetacea</name>
    <name type="common">whales</name>
    <dbReference type="NCBI Taxonomy" id="9721"/>
</organismHost>
<organismHost>
    <name type="scientific">Homo sapiens</name>
    <name type="common">Human</name>
    <dbReference type="NCBI Taxonomy" id="9606"/>
</organismHost>
<organismHost>
    <name type="scientific">Phocidae</name>
    <name type="common">true seals</name>
    <dbReference type="NCBI Taxonomy" id="9709"/>
</organismHost>
<organismHost>
    <name type="scientific">Sus scrofa</name>
    <name type="common">Pig</name>
    <dbReference type="NCBI Taxonomy" id="9823"/>
</organismHost>
<sequence>MSLLTEVETYVLSIVPSGPLKAEIAQRLEDVFAGKNTDLEALMEWLKTRPILSPLTKGILGFVFTLTCPSERGLQRRRFVQNALNGNGDPNNMDRAVKLYRKLKREITFHGAKEIALSYSAGALASCMGLIYNRMGAVTTEVAFGLVCATCEQIADSQHRSHRQMVTTTNPLIRHENRMVLASTTAKAMEQMAGSSEQAAEAMEVASQARQMVQAMRAIGTHPRSSAGLKDDLLENLQAYQKRMGVQMQRFK</sequence>
<comment type="function">
    <text evidence="1">Plays critical roles in virus replication, from virus entry and uncoating to assembly and budding of the virus particle. M1 binding to ribonucleocapsids (RNPs) in nucleus seems to inhibit viral transcription. Interaction of viral NEP with M1-RNP is thought to promote nuclear export of the complex, which is targeted to the virion assembly site at the apical plasma membrane in polarized epithelial cells. Interactions with NA and HA may bring M1, a non-raft-associated protein, into lipid rafts. Forms a continuous shell on the inner side of the lipid bilayer in virion, where it binds the RNP. During virus entry into cell, the M2 ion channel acidifies the internal virion core, inducing M1 dissociation from the RNP. M1-free RNPs are transported to the nucleus, where viral transcription and replication can take place.</text>
</comment>
<comment type="function">
    <text evidence="1">Determines the virion's shape: spherical or filamentous. Clinical isolates of influenza are characterized by the presence of significant proportion of filamentous virions, whereas after multiple passage on eggs or cell culture, virions have only spherical morphology. Filamentous virions are thought to be important to infect neighboring cells, and spherical virions more suited to spread through aerosol between hosts organisms.</text>
</comment>
<comment type="subunit">
    <text evidence="1">Homodimer and homomultimer. Interacts with NEP. Binds ribonucleocapsid by both interacting with genomic RNA and NP protein. May interact with HA and NA. Cannot bind NP without genomic RNA.</text>
</comment>
<comment type="subcellular location">
    <subcellularLocation>
        <location evidence="1">Virion membrane</location>
        <topology evidence="1">Peripheral membrane protein</topology>
        <orientation evidence="1">Cytoplasmic side</orientation>
    </subcellularLocation>
    <subcellularLocation>
        <location evidence="1">Host nucleus</location>
    </subcellularLocation>
</comment>
<comment type="alternative products">
    <event type="alternative splicing"/>
    <isoform>
        <id>Q67157-1</id>
        <name>M1</name>
        <sequence type="displayed"/>
    </isoform>
    <isoform>
        <id>Q76V12-1</id>
        <name>M2</name>
        <sequence type="external"/>
    </isoform>
    <text>Only the first 9 residues are shared by the 2 isoforms.</text>
</comment>
<comment type="miscellaneous">
    <text evidence="1">Most abundant protein in virion. When expressed alone can form virus-like particles in transfected cells.</text>
</comment>
<comment type="similarity">
    <text evidence="1">Belongs to the influenza viruses Matrix protein M1 family.</text>
</comment>
<protein>
    <recommendedName>
        <fullName evidence="1">Matrix protein 1</fullName>
        <shortName evidence="1">M1</shortName>
    </recommendedName>
</protein>
<name>M1_I68A0</name>
<reference key="1">
    <citation type="journal article" date="1991" name="J. Virol.">
        <title>Evolutionary analysis of the influenza A virus M gene with comparison of the M1 and M2 proteins.</title>
        <authorList>
            <person name="Ito T."/>
            <person name="Gorman O.T."/>
            <person name="Kawaoka Y."/>
            <person name="Bean W.J."/>
            <person name="Webster R.G."/>
        </authorList>
    </citation>
    <scope>NUCLEOTIDE SEQUENCE [GENOMIC RNA]</scope>
</reference>
<accession>Q67157</accession>
<evidence type="ECO:0000255" key="1">
    <source>
        <dbReference type="HAMAP-Rule" id="MF_04068"/>
    </source>
</evidence>
<proteinExistence type="inferred from homology"/>
<keyword id="KW-0025">Alternative splicing</keyword>
<keyword id="KW-1048">Host nucleus</keyword>
<keyword id="KW-0472">Membrane</keyword>
<keyword id="KW-1185">Reference proteome</keyword>
<keyword id="KW-0694">RNA-binding</keyword>
<keyword id="KW-0468">Viral matrix protein</keyword>
<keyword id="KW-0946">Virion</keyword>
<dbReference type="EMBL" id="M63515">
    <property type="protein sequence ID" value="AAA43277.1"/>
    <property type="molecule type" value="Genomic_RNA"/>
</dbReference>
<dbReference type="SMR" id="Q67157"/>
<dbReference type="Proteomes" id="UP000137932">
    <property type="component" value="Genome"/>
</dbReference>
<dbReference type="GO" id="GO:0042025">
    <property type="term" value="C:host cell nucleus"/>
    <property type="evidence" value="ECO:0007669"/>
    <property type="project" value="UniProtKB-SubCell"/>
</dbReference>
<dbReference type="GO" id="GO:0016020">
    <property type="term" value="C:membrane"/>
    <property type="evidence" value="ECO:0007669"/>
    <property type="project" value="UniProtKB-KW"/>
</dbReference>
<dbReference type="GO" id="GO:0055036">
    <property type="term" value="C:virion membrane"/>
    <property type="evidence" value="ECO:0007669"/>
    <property type="project" value="UniProtKB-SubCell"/>
</dbReference>
<dbReference type="GO" id="GO:0003723">
    <property type="term" value="F:RNA binding"/>
    <property type="evidence" value="ECO:0007669"/>
    <property type="project" value="UniProtKB-UniRule"/>
</dbReference>
<dbReference type="GO" id="GO:0039660">
    <property type="term" value="F:structural constituent of virion"/>
    <property type="evidence" value="ECO:0007669"/>
    <property type="project" value="UniProtKB-UniRule"/>
</dbReference>
<dbReference type="GO" id="GO:0046761">
    <property type="term" value="P:viral budding from plasma membrane"/>
    <property type="evidence" value="ECO:0007669"/>
    <property type="project" value="UniProtKB-UniRule"/>
</dbReference>
<dbReference type="FunFam" id="1.10.10.180:FF:000001">
    <property type="entry name" value="Matrix protein 1"/>
    <property type="match status" value="1"/>
</dbReference>
<dbReference type="FunFam" id="1.20.91.10:FF:000001">
    <property type="entry name" value="Matrix protein 1"/>
    <property type="match status" value="1"/>
</dbReference>
<dbReference type="Gene3D" id="1.10.10.180">
    <property type="match status" value="1"/>
</dbReference>
<dbReference type="Gene3D" id="1.20.91.10">
    <property type="match status" value="1"/>
</dbReference>
<dbReference type="HAMAP" id="MF_04068">
    <property type="entry name" value="INFV_M1"/>
    <property type="match status" value="1"/>
</dbReference>
<dbReference type="InterPro" id="IPR036039">
    <property type="entry name" value="Flu_matrix_M1"/>
</dbReference>
<dbReference type="InterPro" id="IPR013188">
    <property type="entry name" value="Flu_matrix_M1_C"/>
</dbReference>
<dbReference type="InterPro" id="IPR001561">
    <property type="entry name" value="Flu_matrix_M1_N"/>
</dbReference>
<dbReference type="InterPro" id="IPR015423">
    <property type="entry name" value="Flu_matrix_M1_N_sub1"/>
</dbReference>
<dbReference type="InterPro" id="IPR015799">
    <property type="entry name" value="Flu_matrix_M1_N_sub2"/>
</dbReference>
<dbReference type="InterPro" id="IPR037533">
    <property type="entry name" value="INFV_M1"/>
</dbReference>
<dbReference type="Pfam" id="PF00598">
    <property type="entry name" value="Flu_M1"/>
    <property type="match status" value="1"/>
</dbReference>
<dbReference type="Pfam" id="PF08289">
    <property type="entry name" value="Flu_M1_C"/>
    <property type="match status" value="1"/>
</dbReference>
<dbReference type="SMART" id="SM00759">
    <property type="entry name" value="Flu_M1_C"/>
    <property type="match status" value="1"/>
</dbReference>
<dbReference type="SUPFAM" id="SSF48145">
    <property type="entry name" value="Influenza virus matrix protein M1"/>
    <property type="match status" value="1"/>
</dbReference>
<organism>
    <name type="scientific">Influenza A virus (strain A/Aichi/2/1968 H3N2)</name>
    <dbReference type="NCBI Taxonomy" id="387139"/>
    <lineage>
        <taxon>Viruses</taxon>
        <taxon>Riboviria</taxon>
        <taxon>Orthornavirae</taxon>
        <taxon>Negarnaviricota</taxon>
        <taxon>Polyploviricotina</taxon>
        <taxon>Insthoviricetes</taxon>
        <taxon>Articulavirales</taxon>
        <taxon>Orthomyxoviridae</taxon>
        <taxon>Alphainfluenzavirus</taxon>
        <taxon>Alphainfluenzavirus influenzae</taxon>
        <taxon>Influenza A virus</taxon>
    </lineage>
</organism>
<feature type="chain" id="PRO_0000260832" description="Matrix protein 1">
    <location>
        <begin position="1"/>
        <end position="252"/>
    </location>
</feature>
<feature type="region of interest" description="Membrane-binding" evidence="1">
    <location>
        <begin position="1"/>
        <end position="164"/>
    </location>
</feature>
<feature type="region of interest" description="RNP-binding" evidence="1">
    <location>
        <begin position="165"/>
        <end position="252"/>
    </location>
</feature>
<feature type="short sequence motif" description="Nuclear localization signal" evidence="1">
    <location>
        <begin position="101"/>
        <end position="105"/>
    </location>
</feature>
<gene>
    <name evidence="1" type="primary">M</name>
</gene>